<keyword id="KW-0028">Amino-acid biosynthesis</keyword>
<keyword id="KW-0057">Aromatic amino acid biosynthesis</keyword>
<keyword id="KW-0521">NADP</keyword>
<keyword id="KW-0560">Oxidoreductase</keyword>
<reference key="1">
    <citation type="submission" date="2008-05" db="EMBL/GenBank/DDBJ databases">
        <title>Genome sequence of Clostridium botulinum Ba4 strain 657.</title>
        <authorList>
            <person name="Shrivastava S."/>
            <person name="Brown J.L."/>
            <person name="Bruce D."/>
            <person name="Detter C."/>
            <person name="Munk C."/>
            <person name="Smith L.A."/>
            <person name="Smith T.J."/>
            <person name="Sutton G."/>
            <person name="Brettin T.S."/>
        </authorList>
    </citation>
    <scope>NUCLEOTIDE SEQUENCE [LARGE SCALE GENOMIC DNA]</scope>
    <source>
        <strain>657 / Type Ba4</strain>
    </source>
</reference>
<evidence type="ECO:0000255" key="1">
    <source>
        <dbReference type="HAMAP-Rule" id="MF_00222"/>
    </source>
</evidence>
<proteinExistence type="inferred from homology"/>
<feature type="chain" id="PRO_1000204258" description="Shikimate dehydrogenase (NADP(+))">
    <location>
        <begin position="1"/>
        <end position="258"/>
    </location>
</feature>
<feature type="active site" description="Proton acceptor" evidence="1">
    <location>
        <position position="65"/>
    </location>
</feature>
<feature type="binding site" evidence="1">
    <location>
        <begin position="14"/>
        <end position="16"/>
    </location>
    <ligand>
        <name>shikimate</name>
        <dbReference type="ChEBI" id="CHEBI:36208"/>
    </ligand>
</feature>
<feature type="binding site" evidence="1">
    <location>
        <position position="61"/>
    </location>
    <ligand>
        <name>shikimate</name>
        <dbReference type="ChEBI" id="CHEBI:36208"/>
    </ligand>
</feature>
<feature type="binding site" evidence="1">
    <location>
        <position position="86"/>
    </location>
    <ligand>
        <name>shikimate</name>
        <dbReference type="ChEBI" id="CHEBI:36208"/>
    </ligand>
</feature>
<feature type="binding site" evidence="1">
    <location>
        <position position="101"/>
    </location>
    <ligand>
        <name>shikimate</name>
        <dbReference type="ChEBI" id="CHEBI:36208"/>
    </ligand>
</feature>
<feature type="binding site" evidence="1">
    <location>
        <begin position="125"/>
        <end position="129"/>
    </location>
    <ligand>
        <name>NADP(+)</name>
        <dbReference type="ChEBI" id="CHEBI:58349"/>
    </ligand>
</feature>
<feature type="binding site" evidence="1">
    <location>
        <position position="211"/>
    </location>
    <ligand>
        <name>NADP(+)</name>
        <dbReference type="ChEBI" id="CHEBI:58349"/>
    </ligand>
</feature>
<feature type="binding site" evidence="1">
    <location>
        <position position="213"/>
    </location>
    <ligand>
        <name>shikimate</name>
        <dbReference type="ChEBI" id="CHEBI:36208"/>
    </ligand>
</feature>
<feature type="binding site" evidence="1">
    <location>
        <position position="234"/>
    </location>
    <ligand>
        <name>NADP(+)</name>
        <dbReference type="ChEBI" id="CHEBI:58349"/>
    </ligand>
</feature>
<protein>
    <recommendedName>
        <fullName evidence="1">Shikimate dehydrogenase (NADP(+))</fullName>
        <shortName evidence="1">SDH</shortName>
        <ecNumber evidence="1">1.1.1.25</ecNumber>
    </recommendedName>
</protein>
<accession>C3L127</accession>
<comment type="function">
    <text evidence="1">Involved in the biosynthesis of the chorismate, which leads to the biosynthesis of aromatic amino acids. Catalyzes the reversible NADPH linked reduction of 3-dehydroshikimate (DHSA) to yield shikimate (SA).</text>
</comment>
<comment type="catalytic activity">
    <reaction evidence="1">
        <text>shikimate + NADP(+) = 3-dehydroshikimate + NADPH + H(+)</text>
        <dbReference type="Rhea" id="RHEA:17737"/>
        <dbReference type="ChEBI" id="CHEBI:15378"/>
        <dbReference type="ChEBI" id="CHEBI:16630"/>
        <dbReference type="ChEBI" id="CHEBI:36208"/>
        <dbReference type="ChEBI" id="CHEBI:57783"/>
        <dbReference type="ChEBI" id="CHEBI:58349"/>
        <dbReference type="EC" id="1.1.1.25"/>
    </reaction>
</comment>
<comment type="pathway">
    <text evidence="1">Metabolic intermediate biosynthesis; chorismate biosynthesis; chorismate from D-erythrose 4-phosphate and phosphoenolpyruvate: step 4/7.</text>
</comment>
<comment type="subunit">
    <text evidence="1">Homodimer.</text>
</comment>
<comment type="similarity">
    <text evidence="1">Belongs to the shikimate dehydrogenase family.</text>
</comment>
<sequence>MYTTGLIGKNINYSESPEIHNNYYKKNNIPFFYKIFNLKQDQIDDFIKNLHKNNIKGFNVTIPYKETILQYLNDIVYPADKIGAVNTVAVQEDKLIGYNTDYIGFIKSLQYYNIQVKNFKCLIIGSGGSAKCIYYALKELNARDICIVSRNPEKARLKFEKKVKILNIKDENKLDRYDLIVNCTPIGGPNFKEQKPIELKEIKKNCVVYDLNYTPKRSKLLKEAKENGAFIINGEKMLIFQAYSAIGLWCLNGIKGGR</sequence>
<organism>
    <name type="scientific">Clostridium botulinum (strain 657 / Type Ba4)</name>
    <dbReference type="NCBI Taxonomy" id="515621"/>
    <lineage>
        <taxon>Bacteria</taxon>
        <taxon>Bacillati</taxon>
        <taxon>Bacillota</taxon>
        <taxon>Clostridia</taxon>
        <taxon>Eubacteriales</taxon>
        <taxon>Clostridiaceae</taxon>
        <taxon>Clostridium</taxon>
    </lineage>
</organism>
<name>AROE_CLOB6</name>
<gene>
    <name evidence="1" type="primary">aroE</name>
    <name type="ordered locus">CLJ_B2770</name>
</gene>
<dbReference type="EC" id="1.1.1.25" evidence="1"/>
<dbReference type="EMBL" id="CP001083">
    <property type="protein sequence ID" value="ACQ52177.1"/>
    <property type="molecule type" value="Genomic_DNA"/>
</dbReference>
<dbReference type="RefSeq" id="WP_012720593.1">
    <property type="nucleotide sequence ID" value="NC_012658.1"/>
</dbReference>
<dbReference type="SMR" id="C3L127"/>
<dbReference type="KEGG" id="cbi:CLJ_B2770"/>
<dbReference type="HOGENOM" id="CLU_044063_4_1_9"/>
<dbReference type="UniPathway" id="UPA00053">
    <property type="reaction ID" value="UER00087"/>
</dbReference>
<dbReference type="Proteomes" id="UP000002333">
    <property type="component" value="Chromosome"/>
</dbReference>
<dbReference type="GO" id="GO:0005829">
    <property type="term" value="C:cytosol"/>
    <property type="evidence" value="ECO:0007669"/>
    <property type="project" value="TreeGrafter"/>
</dbReference>
<dbReference type="GO" id="GO:0050661">
    <property type="term" value="F:NADP binding"/>
    <property type="evidence" value="ECO:0007669"/>
    <property type="project" value="InterPro"/>
</dbReference>
<dbReference type="GO" id="GO:0004764">
    <property type="term" value="F:shikimate 3-dehydrogenase (NADP+) activity"/>
    <property type="evidence" value="ECO:0007669"/>
    <property type="project" value="UniProtKB-UniRule"/>
</dbReference>
<dbReference type="GO" id="GO:0008652">
    <property type="term" value="P:amino acid biosynthetic process"/>
    <property type="evidence" value="ECO:0007669"/>
    <property type="project" value="UniProtKB-KW"/>
</dbReference>
<dbReference type="GO" id="GO:0009073">
    <property type="term" value="P:aromatic amino acid family biosynthetic process"/>
    <property type="evidence" value="ECO:0007669"/>
    <property type="project" value="UniProtKB-KW"/>
</dbReference>
<dbReference type="GO" id="GO:0009423">
    <property type="term" value="P:chorismate biosynthetic process"/>
    <property type="evidence" value="ECO:0007669"/>
    <property type="project" value="UniProtKB-UniRule"/>
</dbReference>
<dbReference type="GO" id="GO:0019632">
    <property type="term" value="P:shikimate metabolic process"/>
    <property type="evidence" value="ECO:0007669"/>
    <property type="project" value="InterPro"/>
</dbReference>
<dbReference type="CDD" id="cd01065">
    <property type="entry name" value="NAD_bind_Shikimate_DH"/>
    <property type="match status" value="1"/>
</dbReference>
<dbReference type="FunFam" id="3.40.50.720:FF:000853">
    <property type="entry name" value="Shikimate dehydrogenase (NADP(+))"/>
    <property type="match status" value="1"/>
</dbReference>
<dbReference type="Gene3D" id="3.40.50.10860">
    <property type="entry name" value="Leucine Dehydrogenase, chain A, domain 1"/>
    <property type="match status" value="1"/>
</dbReference>
<dbReference type="Gene3D" id="3.40.50.720">
    <property type="entry name" value="NAD(P)-binding Rossmann-like Domain"/>
    <property type="match status" value="1"/>
</dbReference>
<dbReference type="HAMAP" id="MF_00222">
    <property type="entry name" value="Shikimate_DH_AroE"/>
    <property type="match status" value="1"/>
</dbReference>
<dbReference type="InterPro" id="IPR046346">
    <property type="entry name" value="Aminoacid_DH-like_N_sf"/>
</dbReference>
<dbReference type="InterPro" id="IPR036291">
    <property type="entry name" value="NAD(P)-bd_dom_sf"/>
</dbReference>
<dbReference type="InterPro" id="IPR011342">
    <property type="entry name" value="Shikimate_DH"/>
</dbReference>
<dbReference type="InterPro" id="IPR013708">
    <property type="entry name" value="Shikimate_DH-bd_N"/>
</dbReference>
<dbReference type="InterPro" id="IPR022893">
    <property type="entry name" value="Shikimate_DH_fam"/>
</dbReference>
<dbReference type="InterPro" id="IPR006151">
    <property type="entry name" value="Shikm_DH/Glu-tRNA_Rdtase"/>
</dbReference>
<dbReference type="NCBIfam" id="TIGR00507">
    <property type="entry name" value="aroE"/>
    <property type="match status" value="1"/>
</dbReference>
<dbReference type="PANTHER" id="PTHR21089:SF1">
    <property type="entry name" value="BIFUNCTIONAL 3-DEHYDROQUINATE DEHYDRATASE_SHIKIMATE DEHYDROGENASE, CHLOROPLASTIC"/>
    <property type="match status" value="1"/>
</dbReference>
<dbReference type="PANTHER" id="PTHR21089">
    <property type="entry name" value="SHIKIMATE DEHYDROGENASE"/>
    <property type="match status" value="1"/>
</dbReference>
<dbReference type="Pfam" id="PF01488">
    <property type="entry name" value="Shikimate_DH"/>
    <property type="match status" value="1"/>
</dbReference>
<dbReference type="Pfam" id="PF08501">
    <property type="entry name" value="Shikimate_dh_N"/>
    <property type="match status" value="1"/>
</dbReference>
<dbReference type="SUPFAM" id="SSF53223">
    <property type="entry name" value="Aminoacid dehydrogenase-like, N-terminal domain"/>
    <property type="match status" value="1"/>
</dbReference>
<dbReference type="SUPFAM" id="SSF51735">
    <property type="entry name" value="NAD(P)-binding Rossmann-fold domains"/>
    <property type="match status" value="1"/>
</dbReference>